<dbReference type="EC" id="2.7.4.6" evidence="1"/>
<dbReference type="EMBL" id="CP001037">
    <property type="protein sequence ID" value="ACC84557.1"/>
    <property type="molecule type" value="Genomic_DNA"/>
</dbReference>
<dbReference type="RefSeq" id="WP_012412496.1">
    <property type="nucleotide sequence ID" value="NC_010628.1"/>
</dbReference>
<dbReference type="SMR" id="B2IX22"/>
<dbReference type="STRING" id="63737.Npun_R6278"/>
<dbReference type="EnsemblBacteria" id="ACC84557">
    <property type="protein sequence ID" value="ACC84557"/>
    <property type="gene ID" value="Npun_R6278"/>
</dbReference>
<dbReference type="KEGG" id="npu:Npun_R6278"/>
<dbReference type="eggNOG" id="COG0105">
    <property type="taxonomic scope" value="Bacteria"/>
</dbReference>
<dbReference type="HOGENOM" id="CLU_060216_6_3_3"/>
<dbReference type="OrthoDB" id="9801161at2"/>
<dbReference type="PhylomeDB" id="B2IX22"/>
<dbReference type="Proteomes" id="UP000001191">
    <property type="component" value="Chromosome"/>
</dbReference>
<dbReference type="GO" id="GO:0005737">
    <property type="term" value="C:cytoplasm"/>
    <property type="evidence" value="ECO:0007669"/>
    <property type="project" value="UniProtKB-SubCell"/>
</dbReference>
<dbReference type="GO" id="GO:0005524">
    <property type="term" value="F:ATP binding"/>
    <property type="evidence" value="ECO:0007669"/>
    <property type="project" value="UniProtKB-UniRule"/>
</dbReference>
<dbReference type="GO" id="GO:0046872">
    <property type="term" value="F:metal ion binding"/>
    <property type="evidence" value="ECO:0007669"/>
    <property type="project" value="UniProtKB-KW"/>
</dbReference>
<dbReference type="GO" id="GO:0004550">
    <property type="term" value="F:nucleoside diphosphate kinase activity"/>
    <property type="evidence" value="ECO:0007669"/>
    <property type="project" value="UniProtKB-UniRule"/>
</dbReference>
<dbReference type="GO" id="GO:0006241">
    <property type="term" value="P:CTP biosynthetic process"/>
    <property type="evidence" value="ECO:0007669"/>
    <property type="project" value="UniProtKB-UniRule"/>
</dbReference>
<dbReference type="GO" id="GO:0006183">
    <property type="term" value="P:GTP biosynthetic process"/>
    <property type="evidence" value="ECO:0007669"/>
    <property type="project" value="UniProtKB-UniRule"/>
</dbReference>
<dbReference type="GO" id="GO:0006228">
    <property type="term" value="P:UTP biosynthetic process"/>
    <property type="evidence" value="ECO:0007669"/>
    <property type="project" value="UniProtKB-UniRule"/>
</dbReference>
<dbReference type="CDD" id="cd04413">
    <property type="entry name" value="NDPk_I"/>
    <property type="match status" value="1"/>
</dbReference>
<dbReference type="FunFam" id="3.30.70.141:FF:000002">
    <property type="entry name" value="Nucleoside diphosphate kinase"/>
    <property type="match status" value="1"/>
</dbReference>
<dbReference type="Gene3D" id="3.30.70.141">
    <property type="entry name" value="Nucleoside diphosphate kinase-like domain"/>
    <property type="match status" value="1"/>
</dbReference>
<dbReference type="HAMAP" id="MF_00451">
    <property type="entry name" value="NDP_kinase"/>
    <property type="match status" value="1"/>
</dbReference>
<dbReference type="InterPro" id="IPR034907">
    <property type="entry name" value="NDK-like_dom"/>
</dbReference>
<dbReference type="InterPro" id="IPR036850">
    <property type="entry name" value="NDK-like_dom_sf"/>
</dbReference>
<dbReference type="InterPro" id="IPR001564">
    <property type="entry name" value="Nucleoside_diP_kinase"/>
</dbReference>
<dbReference type="InterPro" id="IPR023005">
    <property type="entry name" value="Nucleoside_diP_kinase_AS"/>
</dbReference>
<dbReference type="NCBIfam" id="NF001908">
    <property type="entry name" value="PRK00668.1"/>
    <property type="match status" value="1"/>
</dbReference>
<dbReference type="PANTHER" id="PTHR11349">
    <property type="entry name" value="NUCLEOSIDE DIPHOSPHATE KINASE"/>
    <property type="match status" value="1"/>
</dbReference>
<dbReference type="Pfam" id="PF00334">
    <property type="entry name" value="NDK"/>
    <property type="match status" value="1"/>
</dbReference>
<dbReference type="PRINTS" id="PR01243">
    <property type="entry name" value="NUCDPKINASE"/>
</dbReference>
<dbReference type="SMART" id="SM00562">
    <property type="entry name" value="NDK"/>
    <property type="match status" value="1"/>
</dbReference>
<dbReference type="SUPFAM" id="SSF54919">
    <property type="entry name" value="Nucleoside diphosphate kinase, NDK"/>
    <property type="match status" value="1"/>
</dbReference>
<dbReference type="PROSITE" id="PS00469">
    <property type="entry name" value="NDPK"/>
    <property type="match status" value="1"/>
</dbReference>
<dbReference type="PROSITE" id="PS51374">
    <property type="entry name" value="NDPK_LIKE"/>
    <property type="match status" value="1"/>
</dbReference>
<comment type="function">
    <text evidence="1">Major role in the synthesis of nucleoside triphosphates other than ATP. The ATP gamma phosphate is transferred to the NDP beta phosphate via a ping-pong mechanism, using a phosphorylated active-site intermediate.</text>
</comment>
<comment type="catalytic activity">
    <reaction evidence="1">
        <text>a 2'-deoxyribonucleoside 5'-diphosphate + ATP = a 2'-deoxyribonucleoside 5'-triphosphate + ADP</text>
        <dbReference type="Rhea" id="RHEA:44640"/>
        <dbReference type="ChEBI" id="CHEBI:30616"/>
        <dbReference type="ChEBI" id="CHEBI:61560"/>
        <dbReference type="ChEBI" id="CHEBI:73316"/>
        <dbReference type="ChEBI" id="CHEBI:456216"/>
        <dbReference type="EC" id="2.7.4.6"/>
    </reaction>
</comment>
<comment type="catalytic activity">
    <reaction evidence="1">
        <text>a ribonucleoside 5'-diphosphate + ATP = a ribonucleoside 5'-triphosphate + ADP</text>
        <dbReference type="Rhea" id="RHEA:18113"/>
        <dbReference type="ChEBI" id="CHEBI:30616"/>
        <dbReference type="ChEBI" id="CHEBI:57930"/>
        <dbReference type="ChEBI" id="CHEBI:61557"/>
        <dbReference type="ChEBI" id="CHEBI:456216"/>
        <dbReference type="EC" id="2.7.4.6"/>
    </reaction>
</comment>
<comment type="cofactor">
    <cofactor evidence="1">
        <name>Mg(2+)</name>
        <dbReference type="ChEBI" id="CHEBI:18420"/>
    </cofactor>
</comment>
<comment type="subunit">
    <text evidence="1">Homotetramer.</text>
</comment>
<comment type="subcellular location">
    <subcellularLocation>
        <location evidence="1">Cytoplasm</location>
    </subcellularLocation>
</comment>
<comment type="similarity">
    <text evidence="1">Belongs to the NDK family.</text>
</comment>
<proteinExistence type="inferred from homology"/>
<keyword id="KW-0067">ATP-binding</keyword>
<keyword id="KW-0963">Cytoplasm</keyword>
<keyword id="KW-0418">Kinase</keyword>
<keyword id="KW-0460">Magnesium</keyword>
<keyword id="KW-0479">Metal-binding</keyword>
<keyword id="KW-0546">Nucleotide metabolism</keyword>
<keyword id="KW-0547">Nucleotide-binding</keyword>
<keyword id="KW-0597">Phosphoprotein</keyword>
<keyword id="KW-1185">Reference proteome</keyword>
<keyword id="KW-0808">Transferase</keyword>
<evidence type="ECO:0000255" key="1">
    <source>
        <dbReference type="HAMAP-Rule" id="MF_00451"/>
    </source>
</evidence>
<sequence length="149" mass="16679">MERTFLAIKPDGVQRGLVGEIIRRFETKGFTLVGLKFLKVSKELAEQHYGVHRERPFFGSLVEFITSSPVVAMVWEGDGVVASARKIIGATNPLTSEPGTIRGDFGINIGRNLIHGSDAPETAQQEIALWFKDEELVNWQPHITPWLHE</sequence>
<accession>B2IX22</accession>
<gene>
    <name evidence="1" type="primary">ndk</name>
    <name type="ordered locus">Npun_R6278</name>
</gene>
<reference key="1">
    <citation type="journal article" date="2013" name="Plant Physiol.">
        <title>A Nostoc punctiforme Sugar Transporter Necessary to Establish a Cyanobacterium-Plant Symbiosis.</title>
        <authorList>
            <person name="Ekman M."/>
            <person name="Picossi S."/>
            <person name="Campbell E.L."/>
            <person name="Meeks J.C."/>
            <person name="Flores E."/>
        </authorList>
    </citation>
    <scope>NUCLEOTIDE SEQUENCE [LARGE SCALE GENOMIC DNA]</scope>
    <source>
        <strain>ATCC 29133 / PCC 73102</strain>
    </source>
</reference>
<protein>
    <recommendedName>
        <fullName evidence="1">Nucleoside diphosphate kinase</fullName>
        <shortName evidence="1">NDK</shortName>
        <shortName evidence="1">NDP kinase</shortName>
        <ecNumber evidence="1">2.7.4.6</ecNumber>
    </recommendedName>
    <alternativeName>
        <fullName evidence="1">Nucleoside-2-P kinase</fullName>
    </alternativeName>
</protein>
<organism>
    <name type="scientific">Nostoc punctiforme (strain ATCC 29133 / PCC 73102)</name>
    <dbReference type="NCBI Taxonomy" id="63737"/>
    <lineage>
        <taxon>Bacteria</taxon>
        <taxon>Bacillati</taxon>
        <taxon>Cyanobacteriota</taxon>
        <taxon>Cyanophyceae</taxon>
        <taxon>Nostocales</taxon>
        <taxon>Nostocaceae</taxon>
        <taxon>Nostoc</taxon>
    </lineage>
</organism>
<feature type="chain" id="PRO_1000192279" description="Nucleoside diphosphate kinase">
    <location>
        <begin position="1"/>
        <end position="149"/>
    </location>
</feature>
<feature type="active site" description="Pros-phosphohistidine intermediate" evidence="1">
    <location>
        <position position="115"/>
    </location>
</feature>
<feature type="binding site" evidence="1">
    <location>
        <position position="9"/>
    </location>
    <ligand>
        <name>ATP</name>
        <dbReference type="ChEBI" id="CHEBI:30616"/>
    </ligand>
</feature>
<feature type="binding site" evidence="1">
    <location>
        <position position="57"/>
    </location>
    <ligand>
        <name>ATP</name>
        <dbReference type="ChEBI" id="CHEBI:30616"/>
    </ligand>
</feature>
<feature type="binding site" evidence="1">
    <location>
        <position position="85"/>
    </location>
    <ligand>
        <name>ATP</name>
        <dbReference type="ChEBI" id="CHEBI:30616"/>
    </ligand>
</feature>
<feature type="binding site" evidence="1">
    <location>
        <position position="91"/>
    </location>
    <ligand>
        <name>ATP</name>
        <dbReference type="ChEBI" id="CHEBI:30616"/>
    </ligand>
</feature>
<feature type="binding site" evidence="1">
    <location>
        <position position="102"/>
    </location>
    <ligand>
        <name>ATP</name>
        <dbReference type="ChEBI" id="CHEBI:30616"/>
    </ligand>
</feature>
<feature type="binding site" evidence="1">
    <location>
        <position position="112"/>
    </location>
    <ligand>
        <name>ATP</name>
        <dbReference type="ChEBI" id="CHEBI:30616"/>
    </ligand>
</feature>
<name>NDK_NOSP7</name>